<protein>
    <recommendedName>
        <fullName evidence="1">Probable septum site-determining protein MinC</fullName>
    </recommendedName>
</protein>
<feature type="chain" id="PRO_0000189020" description="Probable septum site-determining protein MinC">
    <location>
        <begin position="1"/>
        <end position="292"/>
    </location>
</feature>
<feature type="region of interest" description="Disordered" evidence="2">
    <location>
        <begin position="109"/>
        <end position="188"/>
    </location>
</feature>
<feature type="compositionally biased region" description="Acidic residues" evidence="2">
    <location>
        <begin position="140"/>
        <end position="150"/>
    </location>
</feature>
<feature type="compositionally biased region" description="Polar residues" evidence="2">
    <location>
        <begin position="171"/>
        <end position="185"/>
    </location>
</feature>
<dbReference type="EMBL" id="BX640420">
    <property type="protein sequence ID" value="CAE43493.1"/>
    <property type="molecule type" value="Genomic_DNA"/>
</dbReference>
<dbReference type="RefSeq" id="NP_881777.1">
    <property type="nucleotide sequence ID" value="NC_002929.2"/>
</dbReference>
<dbReference type="RefSeq" id="WP_010931362.1">
    <property type="nucleotide sequence ID" value="NZ_CP039022.1"/>
</dbReference>
<dbReference type="SMR" id="Q7VU93"/>
<dbReference type="STRING" id="257313.BP3227"/>
<dbReference type="PaxDb" id="257313-BP3227"/>
<dbReference type="GeneID" id="69603154"/>
<dbReference type="KEGG" id="bpe:BP3227"/>
<dbReference type="PATRIC" id="fig|257313.5.peg.3488"/>
<dbReference type="eggNOG" id="COG0850">
    <property type="taxonomic scope" value="Bacteria"/>
</dbReference>
<dbReference type="HOGENOM" id="CLU_067812_0_0_4"/>
<dbReference type="Proteomes" id="UP000002676">
    <property type="component" value="Chromosome"/>
</dbReference>
<dbReference type="GO" id="GO:0000902">
    <property type="term" value="P:cell morphogenesis"/>
    <property type="evidence" value="ECO:0007669"/>
    <property type="project" value="InterPro"/>
</dbReference>
<dbReference type="GO" id="GO:0000917">
    <property type="term" value="P:division septum assembly"/>
    <property type="evidence" value="ECO:0007669"/>
    <property type="project" value="UniProtKB-KW"/>
</dbReference>
<dbReference type="GO" id="GO:0051302">
    <property type="term" value="P:regulation of cell division"/>
    <property type="evidence" value="ECO:0007669"/>
    <property type="project" value="InterPro"/>
</dbReference>
<dbReference type="GO" id="GO:1901891">
    <property type="term" value="P:regulation of cell septum assembly"/>
    <property type="evidence" value="ECO:0007669"/>
    <property type="project" value="InterPro"/>
</dbReference>
<dbReference type="Gene3D" id="2.160.20.70">
    <property type="match status" value="1"/>
</dbReference>
<dbReference type="Gene3D" id="3.30.70.260">
    <property type="match status" value="1"/>
</dbReference>
<dbReference type="HAMAP" id="MF_00267">
    <property type="entry name" value="MinC"/>
    <property type="match status" value="1"/>
</dbReference>
<dbReference type="InterPro" id="IPR016098">
    <property type="entry name" value="CAP/MinC_C"/>
</dbReference>
<dbReference type="InterPro" id="IPR013033">
    <property type="entry name" value="MinC"/>
</dbReference>
<dbReference type="InterPro" id="IPR036145">
    <property type="entry name" value="MinC_C_sf"/>
</dbReference>
<dbReference type="InterPro" id="IPR007874">
    <property type="entry name" value="MinC_N"/>
</dbReference>
<dbReference type="InterPro" id="IPR005526">
    <property type="entry name" value="Septum_form_inhib_MinC_C"/>
</dbReference>
<dbReference type="NCBIfam" id="TIGR01222">
    <property type="entry name" value="minC"/>
    <property type="match status" value="1"/>
</dbReference>
<dbReference type="PANTHER" id="PTHR34108">
    <property type="entry name" value="SEPTUM SITE-DETERMINING PROTEIN MINC"/>
    <property type="match status" value="1"/>
</dbReference>
<dbReference type="PANTHER" id="PTHR34108:SF1">
    <property type="entry name" value="SEPTUM SITE-DETERMINING PROTEIN MINC"/>
    <property type="match status" value="1"/>
</dbReference>
<dbReference type="Pfam" id="PF03775">
    <property type="entry name" value="MinC_C"/>
    <property type="match status" value="1"/>
</dbReference>
<dbReference type="Pfam" id="PF05209">
    <property type="entry name" value="MinC_N"/>
    <property type="match status" value="1"/>
</dbReference>
<dbReference type="SUPFAM" id="SSF63848">
    <property type="entry name" value="Cell-division inhibitor MinC, C-terminal domain"/>
    <property type="match status" value="1"/>
</dbReference>
<name>MINC_BORPE</name>
<accession>Q7VU93</accession>
<evidence type="ECO:0000255" key="1">
    <source>
        <dbReference type="HAMAP-Rule" id="MF_00267"/>
    </source>
</evidence>
<evidence type="ECO:0000256" key="2">
    <source>
        <dbReference type="SAM" id="MobiDB-lite"/>
    </source>
</evidence>
<organism>
    <name type="scientific">Bordetella pertussis (strain Tohama I / ATCC BAA-589 / NCTC 13251)</name>
    <dbReference type="NCBI Taxonomy" id="257313"/>
    <lineage>
        <taxon>Bacteria</taxon>
        <taxon>Pseudomonadati</taxon>
        <taxon>Pseudomonadota</taxon>
        <taxon>Betaproteobacteria</taxon>
        <taxon>Burkholderiales</taxon>
        <taxon>Alcaligenaceae</taxon>
        <taxon>Bordetella</taxon>
    </lineage>
</organism>
<comment type="function">
    <text evidence="1">Cell division inhibitor that blocks the formation of polar Z ring septums. Rapidly oscillates between the poles of the cell to destabilize FtsZ filaments that have formed before they mature into polar Z rings. Prevents FtsZ polymerization.</text>
</comment>
<comment type="subunit">
    <text evidence="1">Interacts with MinD and FtsZ.</text>
</comment>
<comment type="similarity">
    <text evidence="1">Belongs to the MinC family.</text>
</comment>
<reference key="1">
    <citation type="journal article" date="2003" name="Nat. Genet.">
        <title>Comparative analysis of the genome sequences of Bordetella pertussis, Bordetella parapertussis and Bordetella bronchiseptica.</title>
        <authorList>
            <person name="Parkhill J."/>
            <person name="Sebaihia M."/>
            <person name="Preston A."/>
            <person name="Murphy L.D."/>
            <person name="Thomson N.R."/>
            <person name="Harris D.E."/>
            <person name="Holden M.T.G."/>
            <person name="Churcher C.M."/>
            <person name="Bentley S.D."/>
            <person name="Mungall K.L."/>
            <person name="Cerdeno-Tarraga A.-M."/>
            <person name="Temple L."/>
            <person name="James K.D."/>
            <person name="Harris B."/>
            <person name="Quail M.A."/>
            <person name="Achtman M."/>
            <person name="Atkin R."/>
            <person name="Baker S."/>
            <person name="Basham D."/>
            <person name="Bason N."/>
            <person name="Cherevach I."/>
            <person name="Chillingworth T."/>
            <person name="Collins M."/>
            <person name="Cronin A."/>
            <person name="Davis P."/>
            <person name="Doggett J."/>
            <person name="Feltwell T."/>
            <person name="Goble A."/>
            <person name="Hamlin N."/>
            <person name="Hauser H."/>
            <person name="Holroyd S."/>
            <person name="Jagels K."/>
            <person name="Leather S."/>
            <person name="Moule S."/>
            <person name="Norberczak H."/>
            <person name="O'Neil S."/>
            <person name="Ormond D."/>
            <person name="Price C."/>
            <person name="Rabbinowitsch E."/>
            <person name="Rutter S."/>
            <person name="Sanders M."/>
            <person name="Saunders D."/>
            <person name="Seeger K."/>
            <person name="Sharp S."/>
            <person name="Simmonds M."/>
            <person name="Skelton J."/>
            <person name="Squares R."/>
            <person name="Squares S."/>
            <person name="Stevens K."/>
            <person name="Unwin L."/>
            <person name="Whitehead S."/>
            <person name="Barrell B.G."/>
            <person name="Maskell D.J."/>
        </authorList>
    </citation>
    <scope>NUCLEOTIDE SEQUENCE [LARGE SCALE GENOMIC DNA]</scope>
    <source>
        <strain>Tohama I / ATCC BAA-589 / NCTC 13251</strain>
    </source>
</reference>
<sequence>MNTESLALDFKSATLYAIRVVLHDADTTRLRAALDKRMADAGSFFENEPVVIDATRVDAPVDWPALLQALADHNLPPIGVVAEGANLQGARDAGLVPVELSTSVARAPQVIDTAPPNDVATPVPSVPEATAEATAKAGPQDDEADGEQADEAPAHNPESVPTRAARETTEANRPTATPPQSSSALVITKPLRSGQRVYARHTDLIVIGMVSQGAEVIADGNVHVYGPLRGKAMAGARGDTSARIFTTQLDAELLAVAGVYRVVEDKLDRALHNQPALVRLDGDTLRIEALKG</sequence>
<gene>
    <name evidence="1" type="primary">minC</name>
    <name type="ordered locus">BP3227</name>
</gene>
<keyword id="KW-0131">Cell cycle</keyword>
<keyword id="KW-0132">Cell division</keyword>
<keyword id="KW-1185">Reference proteome</keyword>
<keyword id="KW-0717">Septation</keyword>
<proteinExistence type="inferred from homology"/>